<feature type="chain" id="PRO_0000349738" description="tRNA-specific 2-thiouridylase MnmA">
    <location>
        <begin position="1"/>
        <end position="394"/>
    </location>
</feature>
<feature type="region of interest" description="Interaction with target base in tRNA" evidence="1">
    <location>
        <begin position="99"/>
        <end position="101"/>
    </location>
</feature>
<feature type="region of interest" description="Interaction with tRNA" evidence="1">
    <location>
        <begin position="152"/>
        <end position="154"/>
    </location>
</feature>
<feature type="region of interest" description="Interaction with tRNA" evidence="1">
    <location>
        <begin position="329"/>
        <end position="330"/>
    </location>
</feature>
<feature type="active site" description="Nucleophile" evidence="1">
    <location>
        <position position="104"/>
    </location>
</feature>
<feature type="active site" description="Cysteine persulfide intermediate" evidence="1">
    <location>
        <position position="202"/>
    </location>
</feature>
<feature type="binding site" evidence="1">
    <location>
        <begin position="13"/>
        <end position="20"/>
    </location>
    <ligand>
        <name>ATP</name>
        <dbReference type="ChEBI" id="CHEBI:30616"/>
    </ligand>
</feature>
<feature type="binding site" evidence="1">
    <location>
        <position position="39"/>
    </location>
    <ligand>
        <name>ATP</name>
        <dbReference type="ChEBI" id="CHEBI:30616"/>
    </ligand>
</feature>
<feature type="binding site" evidence="1">
    <location>
        <position position="128"/>
    </location>
    <ligand>
        <name>ATP</name>
        <dbReference type="ChEBI" id="CHEBI:30616"/>
    </ligand>
</feature>
<feature type="site" description="Interaction with tRNA" evidence="1">
    <location>
        <position position="129"/>
    </location>
</feature>
<feature type="site" description="Interaction with tRNA" evidence="1">
    <location>
        <position position="362"/>
    </location>
</feature>
<feature type="disulfide bond" description="Alternate" evidence="1">
    <location>
        <begin position="104"/>
        <end position="202"/>
    </location>
</feature>
<accession>A1VTY5</accession>
<dbReference type="EC" id="2.8.1.13" evidence="1"/>
<dbReference type="EMBL" id="CP000529">
    <property type="protein sequence ID" value="ABM39113.1"/>
    <property type="molecule type" value="Genomic_DNA"/>
</dbReference>
<dbReference type="RefSeq" id="WP_011803179.1">
    <property type="nucleotide sequence ID" value="NC_008781.1"/>
</dbReference>
<dbReference type="SMR" id="A1VTY5"/>
<dbReference type="STRING" id="365044.Pnap_3817"/>
<dbReference type="KEGG" id="pna:Pnap_3817"/>
<dbReference type="eggNOG" id="COG0482">
    <property type="taxonomic scope" value="Bacteria"/>
</dbReference>
<dbReference type="HOGENOM" id="CLU_035188_1_0_4"/>
<dbReference type="OrthoDB" id="9800696at2"/>
<dbReference type="Proteomes" id="UP000000644">
    <property type="component" value="Chromosome"/>
</dbReference>
<dbReference type="GO" id="GO:0005737">
    <property type="term" value="C:cytoplasm"/>
    <property type="evidence" value="ECO:0007669"/>
    <property type="project" value="UniProtKB-SubCell"/>
</dbReference>
<dbReference type="GO" id="GO:0005524">
    <property type="term" value="F:ATP binding"/>
    <property type="evidence" value="ECO:0007669"/>
    <property type="project" value="UniProtKB-KW"/>
</dbReference>
<dbReference type="GO" id="GO:0000049">
    <property type="term" value="F:tRNA binding"/>
    <property type="evidence" value="ECO:0007669"/>
    <property type="project" value="UniProtKB-KW"/>
</dbReference>
<dbReference type="GO" id="GO:0103016">
    <property type="term" value="F:tRNA-uridine 2-sulfurtransferase activity"/>
    <property type="evidence" value="ECO:0007669"/>
    <property type="project" value="UniProtKB-EC"/>
</dbReference>
<dbReference type="GO" id="GO:0002143">
    <property type="term" value="P:tRNA wobble position uridine thiolation"/>
    <property type="evidence" value="ECO:0007669"/>
    <property type="project" value="TreeGrafter"/>
</dbReference>
<dbReference type="CDD" id="cd01998">
    <property type="entry name" value="MnmA_TRMU-like"/>
    <property type="match status" value="1"/>
</dbReference>
<dbReference type="FunFam" id="2.40.30.10:FF:000023">
    <property type="entry name" value="tRNA-specific 2-thiouridylase MnmA"/>
    <property type="match status" value="1"/>
</dbReference>
<dbReference type="FunFam" id="3.40.50.620:FF:000004">
    <property type="entry name" value="tRNA-specific 2-thiouridylase MnmA"/>
    <property type="match status" value="1"/>
</dbReference>
<dbReference type="Gene3D" id="2.30.30.280">
    <property type="entry name" value="Adenine nucleotide alpha hydrolases-like domains"/>
    <property type="match status" value="1"/>
</dbReference>
<dbReference type="Gene3D" id="3.40.50.620">
    <property type="entry name" value="HUPs"/>
    <property type="match status" value="1"/>
</dbReference>
<dbReference type="Gene3D" id="2.40.30.10">
    <property type="entry name" value="Translation factors"/>
    <property type="match status" value="1"/>
</dbReference>
<dbReference type="HAMAP" id="MF_00144">
    <property type="entry name" value="tRNA_thiouridyl_MnmA"/>
    <property type="match status" value="1"/>
</dbReference>
<dbReference type="InterPro" id="IPR004506">
    <property type="entry name" value="MnmA-like"/>
</dbReference>
<dbReference type="InterPro" id="IPR046885">
    <property type="entry name" value="MnmA-like_C"/>
</dbReference>
<dbReference type="InterPro" id="IPR046884">
    <property type="entry name" value="MnmA-like_central"/>
</dbReference>
<dbReference type="InterPro" id="IPR023382">
    <property type="entry name" value="MnmA-like_central_sf"/>
</dbReference>
<dbReference type="InterPro" id="IPR014729">
    <property type="entry name" value="Rossmann-like_a/b/a_fold"/>
</dbReference>
<dbReference type="NCBIfam" id="NF001138">
    <property type="entry name" value="PRK00143.1"/>
    <property type="match status" value="1"/>
</dbReference>
<dbReference type="NCBIfam" id="TIGR00420">
    <property type="entry name" value="trmU"/>
    <property type="match status" value="1"/>
</dbReference>
<dbReference type="PANTHER" id="PTHR11933:SF5">
    <property type="entry name" value="MITOCHONDRIAL TRNA-SPECIFIC 2-THIOURIDYLASE 1"/>
    <property type="match status" value="1"/>
</dbReference>
<dbReference type="PANTHER" id="PTHR11933">
    <property type="entry name" value="TRNA 5-METHYLAMINOMETHYL-2-THIOURIDYLATE -METHYLTRANSFERASE"/>
    <property type="match status" value="1"/>
</dbReference>
<dbReference type="Pfam" id="PF03054">
    <property type="entry name" value="tRNA_Me_trans"/>
    <property type="match status" value="1"/>
</dbReference>
<dbReference type="Pfam" id="PF20258">
    <property type="entry name" value="tRNA_Me_trans_C"/>
    <property type="match status" value="1"/>
</dbReference>
<dbReference type="Pfam" id="PF20259">
    <property type="entry name" value="tRNA_Me_trans_M"/>
    <property type="match status" value="1"/>
</dbReference>
<dbReference type="SUPFAM" id="SSF52402">
    <property type="entry name" value="Adenine nucleotide alpha hydrolases-like"/>
    <property type="match status" value="1"/>
</dbReference>
<evidence type="ECO:0000255" key="1">
    <source>
        <dbReference type="HAMAP-Rule" id="MF_00144"/>
    </source>
</evidence>
<name>MNMA_POLNA</name>
<protein>
    <recommendedName>
        <fullName evidence="1">tRNA-specific 2-thiouridylase MnmA</fullName>
        <ecNumber evidence="1">2.8.1.13</ecNumber>
    </recommendedName>
</protein>
<reference key="1">
    <citation type="journal article" date="2009" name="Environ. Microbiol.">
        <title>The genome of Polaromonas naphthalenivorans strain CJ2, isolated from coal tar-contaminated sediment, reveals physiological and metabolic versatility and evolution through extensive horizontal gene transfer.</title>
        <authorList>
            <person name="Yagi J.M."/>
            <person name="Sims D."/>
            <person name="Brettin T."/>
            <person name="Bruce D."/>
            <person name="Madsen E.L."/>
        </authorList>
    </citation>
    <scope>NUCLEOTIDE SEQUENCE [LARGE SCALE GENOMIC DNA]</scope>
    <source>
        <strain>CJ2</strain>
    </source>
</reference>
<proteinExistence type="inferred from homology"/>
<organism>
    <name type="scientific">Polaromonas naphthalenivorans (strain CJ2)</name>
    <dbReference type="NCBI Taxonomy" id="365044"/>
    <lineage>
        <taxon>Bacteria</taxon>
        <taxon>Pseudomonadati</taxon>
        <taxon>Pseudomonadota</taxon>
        <taxon>Betaproteobacteria</taxon>
        <taxon>Burkholderiales</taxon>
        <taxon>Comamonadaceae</taxon>
        <taxon>Polaromonas</taxon>
    </lineage>
</organism>
<sequence length="394" mass="42840">MDKQHSKQRIVVGLSGGVDSAVTAYLLKQQGHEVIGIFMKNWEDDDDSEFCSSNIDFVDAAAVADVIGIEIEHVNFAANYKDRVFAEFLREYQAGRTPNPDILCNAEIKFKAFLDHAMRLGAEKIATGHYARVRQNEATGLHELLKGLDPSKDQSYFLHRLNQAQLSKTLFPVGELHKTEVRRIADEIGLPNARKKDSTGICFIGERPFRDFLNRYIAKAPGPVKNDQGRILGEHVGLSFYTLGQRQGLGIGGVKARGADLKAAQARGQRGVGEHEPWFVARKDMDSNTLWVVQGHDHPWLQSTLLNAQDCSWVAGSAPALGAMAAKTRYRQADAACELVSATAGGCELAFLDAQWAVTPGQSAVLYQGEVCLGGGVIASSNVQNLPGGKPAVA</sequence>
<keyword id="KW-0067">ATP-binding</keyword>
<keyword id="KW-0963">Cytoplasm</keyword>
<keyword id="KW-1015">Disulfide bond</keyword>
<keyword id="KW-0547">Nucleotide-binding</keyword>
<keyword id="KW-1185">Reference proteome</keyword>
<keyword id="KW-0694">RNA-binding</keyword>
<keyword id="KW-0808">Transferase</keyword>
<keyword id="KW-0819">tRNA processing</keyword>
<keyword id="KW-0820">tRNA-binding</keyword>
<comment type="function">
    <text evidence="1">Catalyzes the 2-thiolation of uridine at the wobble position (U34) of tRNA, leading to the formation of s(2)U34.</text>
</comment>
<comment type="catalytic activity">
    <reaction evidence="1">
        <text>S-sulfanyl-L-cysteinyl-[protein] + uridine(34) in tRNA + AH2 + ATP = 2-thiouridine(34) in tRNA + L-cysteinyl-[protein] + A + AMP + diphosphate + H(+)</text>
        <dbReference type="Rhea" id="RHEA:47032"/>
        <dbReference type="Rhea" id="RHEA-COMP:10131"/>
        <dbReference type="Rhea" id="RHEA-COMP:11726"/>
        <dbReference type="Rhea" id="RHEA-COMP:11727"/>
        <dbReference type="Rhea" id="RHEA-COMP:11728"/>
        <dbReference type="ChEBI" id="CHEBI:13193"/>
        <dbReference type="ChEBI" id="CHEBI:15378"/>
        <dbReference type="ChEBI" id="CHEBI:17499"/>
        <dbReference type="ChEBI" id="CHEBI:29950"/>
        <dbReference type="ChEBI" id="CHEBI:30616"/>
        <dbReference type="ChEBI" id="CHEBI:33019"/>
        <dbReference type="ChEBI" id="CHEBI:61963"/>
        <dbReference type="ChEBI" id="CHEBI:65315"/>
        <dbReference type="ChEBI" id="CHEBI:87170"/>
        <dbReference type="ChEBI" id="CHEBI:456215"/>
        <dbReference type="EC" id="2.8.1.13"/>
    </reaction>
</comment>
<comment type="subcellular location">
    <subcellularLocation>
        <location evidence="1">Cytoplasm</location>
    </subcellularLocation>
</comment>
<comment type="similarity">
    <text evidence="1">Belongs to the MnmA/TRMU family.</text>
</comment>
<gene>
    <name evidence="1" type="primary">mnmA</name>
    <name type="ordered locus">Pnap_3817</name>
</gene>